<sequence length="143" mass="16939">MIQFILIQNRHGKNRLSKYYVPFDDDEKVRLKARIHQLISQRNQKFQANFLEWENSKLVYRRYAGLYFCFCVDSTDNDLAILEMIHFFVEILDSFFGNVCELDLIFNFYKVSAILDEIILGGEIGESNKKSVLERIEALEKLE</sequence>
<feature type="chain" id="PRO_0000193813" description="AP-2 complex subunit sigma">
    <location>
        <begin position="1"/>
        <end position="143"/>
    </location>
</feature>
<proteinExistence type="inferred from homology"/>
<evidence type="ECO:0000250" key="1"/>
<evidence type="ECO:0000305" key="2"/>
<comment type="function">
    <text evidence="1">Component of the adaptor complexes which link clathrin to receptors in coated vesicles. Clathrin-associated protein complexes are believed to interact with the cytoplasmic tails of membrane proteins, leading to their selection and concentration (By similarity).</text>
</comment>
<comment type="subunit">
    <text evidence="1">Adaptor protein complex 2 (AP-2) is a heterotetramer composed of two large adaptins (alpha-type subunit apl3 and beta-type subunit apl1), a medium chain (mu-type subunit apm4) and a small adaptin (sigma-type subunit aps2).</text>
</comment>
<comment type="subcellular location">
    <subcellularLocation>
        <location evidence="1">Cell membrane</location>
    </subcellularLocation>
    <subcellularLocation>
        <location evidence="1">Membrane</location>
        <location evidence="1">Coated pit</location>
        <topology evidence="1">Peripheral membrane protein</topology>
        <orientation evidence="1">Cytoplasmic side</orientation>
    </subcellularLocation>
    <text evidence="1">Component of the coat surrounding the cytoplasmic face of the plasma membrane coated vesicles.</text>
</comment>
<comment type="similarity">
    <text evidence="2">Belongs to the adaptor complexes small subunit family.</text>
</comment>
<dbReference type="EMBL" id="CU329671">
    <property type="protein sequence ID" value="CAB39361.1"/>
    <property type="molecule type" value="Genomic_DNA"/>
</dbReference>
<dbReference type="PIR" id="T40635">
    <property type="entry name" value="T40635"/>
</dbReference>
<dbReference type="RefSeq" id="NP_596138.1">
    <property type="nucleotide sequence ID" value="NM_001022056.2"/>
</dbReference>
<dbReference type="SMR" id="Q9Y7L6"/>
<dbReference type="BioGRID" id="277601">
    <property type="interactions" value="11"/>
</dbReference>
<dbReference type="FunCoup" id="Q9Y7L6">
    <property type="interactions" value="521"/>
</dbReference>
<dbReference type="STRING" id="284812.Q9Y7L6"/>
<dbReference type="PaxDb" id="4896-SPBC685.04c.1"/>
<dbReference type="EnsemblFungi" id="SPBC685.04c.1">
    <property type="protein sequence ID" value="SPBC685.04c.1:pep"/>
    <property type="gene ID" value="SPBC685.04c"/>
</dbReference>
<dbReference type="GeneID" id="2541086"/>
<dbReference type="KEGG" id="spo:2541086"/>
<dbReference type="PomBase" id="SPBC685.04c">
    <property type="gene designation" value="aps2"/>
</dbReference>
<dbReference type="VEuPathDB" id="FungiDB:SPBC685.04c"/>
<dbReference type="eggNOG" id="KOG0935">
    <property type="taxonomic scope" value="Eukaryota"/>
</dbReference>
<dbReference type="HOGENOM" id="CLU_061221_3_1_1"/>
<dbReference type="InParanoid" id="Q9Y7L6"/>
<dbReference type="OMA" id="QSNFVEY"/>
<dbReference type="PhylomeDB" id="Q9Y7L6"/>
<dbReference type="Reactome" id="R-SPO-437239">
    <property type="pathway name" value="Recycling pathway of L1"/>
</dbReference>
<dbReference type="Reactome" id="R-SPO-8856825">
    <property type="pathway name" value="Cargo recognition for clathrin-mediated endocytosis"/>
</dbReference>
<dbReference type="Reactome" id="R-SPO-8856828">
    <property type="pathway name" value="Clathrin-mediated endocytosis"/>
</dbReference>
<dbReference type="Reactome" id="R-SPO-8866427">
    <property type="pathway name" value="VLDLR internalisation and degradation"/>
</dbReference>
<dbReference type="Reactome" id="R-SPO-8964038">
    <property type="pathway name" value="LDL clearance"/>
</dbReference>
<dbReference type="PRO" id="PR:Q9Y7L6"/>
<dbReference type="Proteomes" id="UP000002485">
    <property type="component" value="Chromosome II"/>
</dbReference>
<dbReference type="GO" id="GO:0030122">
    <property type="term" value="C:AP-2 adaptor complex"/>
    <property type="evidence" value="ECO:0000266"/>
    <property type="project" value="PomBase"/>
</dbReference>
<dbReference type="GO" id="GO:0005938">
    <property type="term" value="C:cell cortex"/>
    <property type="evidence" value="ECO:0000305"/>
    <property type="project" value="PomBase"/>
</dbReference>
<dbReference type="GO" id="GO:0005829">
    <property type="term" value="C:cytosol"/>
    <property type="evidence" value="ECO:0007005"/>
    <property type="project" value="PomBase"/>
</dbReference>
<dbReference type="GO" id="GO:0043231">
    <property type="term" value="C:intracellular membrane-bounded organelle"/>
    <property type="evidence" value="ECO:0000318"/>
    <property type="project" value="GO_Central"/>
</dbReference>
<dbReference type="GO" id="GO:0005634">
    <property type="term" value="C:nucleus"/>
    <property type="evidence" value="ECO:0007005"/>
    <property type="project" value="PomBase"/>
</dbReference>
<dbReference type="GO" id="GO:0035615">
    <property type="term" value="F:clathrin adaptor activity"/>
    <property type="evidence" value="ECO:0007669"/>
    <property type="project" value="InterPro"/>
</dbReference>
<dbReference type="GO" id="GO:0072583">
    <property type="term" value="P:clathrin-dependent endocytosis"/>
    <property type="evidence" value="ECO:0000305"/>
    <property type="project" value="PomBase"/>
</dbReference>
<dbReference type="GO" id="GO:0006886">
    <property type="term" value="P:intracellular protein transport"/>
    <property type="evidence" value="ECO:0000305"/>
    <property type="project" value="PomBase"/>
</dbReference>
<dbReference type="GO" id="GO:0016192">
    <property type="term" value="P:vesicle-mediated transport"/>
    <property type="evidence" value="ECO:0000318"/>
    <property type="project" value="GO_Central"/>
</dbReference>
<dbReference type="CDD" id="cd14833">
    <property type="entry name" value="AP2_sigma"/>
    <property type="match status" value="1"/>
</dbReference>
<dbReference type="FunFam" id="3.30.450.60:FF:000011">
    <property type="entry name" value="AP complex subunit sigma"/>
    <property type="match status" value="1"/>
</dbReference>
<dbReference type="Gene3D" id="3.30.450.60">
    <property type="match status" value="1"/>
</dbReference>
<dbReference type="InterPro" id="IPR016635">
    <property type="entry name" value="AP_complex_ssu"/>
</dbReference>
<dbReference type="InterPro" id="IPR022775">
    <property type="entry name" value="AP_mu_sigma_su"/>
</dbReference>
<dbReference type="InterPro" id="IPR027156">
    <property type="entry name" value="APS2"/>
</dbReference>
<dbReference type="InterPro" id="IPR000804">
    <property type="entry name" value="Clathrin_sm-chain_CS"/>
</dbReference>
<dbReference type="InterPro" id="IPR011012">
    <property type="entry name" value="Longin-like_dom_sf"/>
</dbReference>
<dbReference type="PANTHER" id="PTHR11753">
    <property type="entry name" value="ADAPTOR COMPLEXES SMALL SUBUNIT FAMILY"/>
    <property type="match status" value="1"/>
</dbReference>
<dbReference type="Pfam" id="PF01217">
    <property type="entry name" value="Clat_adaptor_s"/>
    <property type="match status" value="1"/>
</dbReference>
<dbReference type="PIRSF" id="PIRSF015588">
    <property type="entry name" value="AP_complex_sigma"/>
    <property type="match status" value="1"/>
</dbReference>
<dbReference type="SUPFAM" id="SSF64356">
    <property type="entry name" value="SNARE-like"/>
    <property type="match status" value="1"/>
</dbReference>
<dbReference type="PROSITE" id="PS00989">
    <property type="entry name" value="CLAT_ADAPTOR_S"/>
    <property type="match status" value="1"/>
</dbReference>
<protein>
    <recommendedName>
        <fullName>AP-2 complex subunit sigma</fullName>
    </recommendedName>
    <alternativeName>
        <fullName>Adaptin small chain</fullName>
    </alternativeName>
    <alternativeName>
        <fullName>Clathrin assembly protein 2 sigma small chain</fullName>
    </alternativeName>
    <alternativeName>
        <fullName>Sigma2-adaptin</fullName>
    </alternativeName>
</protein>
<reference key="1">
    <citation type="journal article" date="2002" name="Nature">
        <title>The genome sequence of Schizosaccharomyces pombe.</title>
        <authorList>
            <person name="Wood V."/>
            <person name="Gwilliam R."/>
            <person name="Rajandream M.A."/>
            <person name="Lyne M.H."/>
            <person name="Lyne R."/>
            <person name="Stewart A."/>
            <person name="Sgouros J.G."/>
            <person name="Peat N."/>
            <person name="Hayles J."/>
            <person name="Baker S.G."/>
            <person name="Basham D."/>
            <person name="Bowman S."/>
            <person name="Brooks K."/>
            <person name="Brown D."/>
            <person name="Brown S."/>
            <person name="Chillingworth T."/>
            <person name="Churcher C.M."/>
            <person name="Collins M."/>
            <person name="Connor R."/>
            <person name="Cronin A."/>
            <person name="Davis P."/>
            <person name="Feltwell T."/>
            <person name="Fraser A."/>
            <person name="Gentles S."/>
            <person name="Goble A."/>
            <person name="Hamlin N."/>
            <person name="Harris D.E."/>
            <person name="Hidalgo J."/>
            <person name="Hodgson G."/>
            <person name="Holroyd S."/>
            <person name="Hornsby T."/>
            <person name="Howarth S."/>
            <person name="Huckle E.J."/>
            <person name="Hunt S."/>
            <person name="Jagels K."/>
            <person name="James K.D."/>
            <person name="Jones L."/>
            <person name="Jones M."/>
            <person name="Leather S."/>
            <person name="McDonald S."/>
            <person name="McLean J."/>
            <person name="Mooney P."/>
            <person name="Moule S."/>
            <person name="Mungall K.L."/>
            <person name="Murphy L.D."/>
            <person name="Niblett D."/>
            <person name="Odell C."/>
            <person name="Oliver K."/>
            <person name="O'Neil S."/>
            <person name="Pearson D."/>
            <person name="Quail M.A."/>
            <person name="Rabbinowitsch E."/>
            <person name="Rutherford K.M."/>
            <person name="Rutter S."/>
            <person name="Saunders D."/>
            <person name="Seeger K."/>
            <person name="Sharp S."/>
            <person name="Skelton J."/>
            <person name="Simmonds M.N."/>
            <person name="Squares R."/>
            <person name="Squares S."/>
            <person name="Stevens K."/>
            <person name="Taylor K."/>
            <person name="Taylor R.G."/>
            <person name="Tivey A."/>
            <person name="Walsh S.V."/>
            <person name="Warren T."/>
            <person name="Whitehead S."/>
            <person name="Woodward J.R."/>
            <person name="Volckaert G."/>
            <person name="Aert R."/>
            <person name="Robben J."/>
            <person name="Grymonprez B."/>
            <person name="Weltjens I."/>
            <person name="Vanstreels E."/>
            <person name="Rieger M."/>
            <person name="Schaefer M."/>
            <person name="Mueller-Auer S."/>
            <person name="Gabel C."/>
            <person name="Fuchs M."/>
            <person name="Duesterhoeft A."/>
            <person name="Fritzc C."/>
            <person name="Holzer E."/>
            <person name="Moestl D."/>
            <person name="Hilbert H."/>
            <person name="Borzym K."/>
            <person name="Langer I."/>
            <person name="Beck A."/>
            <person name="Lehrach H."/>
            <person name="Reinhardt R."/>
            <person name="Pohl T.M."/>
            <person name="Eger P."/>
            <person name="Zimmermann W."/>
            <person name="Wedler H."/>
            <person name="Wambutt R."/>
            <person name="Purnelle B."/>
            <person name="Goffeau A."/>
            <person name="Cadieu E."/>
            <person name="Dreano S."/>
            <person name="Gloux S."/>
            <person name="Lelaure V."/>
            <person name="Mottier S."/>
            <person name="Galibert F."/>
            <person name="Aves S.J."/>
            <person name="Xiang Z."/>
            <person name="Hunt C."/>
            <person name="Moore K."/>
            <person name="Hurst S.M."/>
            <person name="Lucas M."/>
            <person name="Rochet M."/>
            <person name="Gaillardin C."/>
            <person name="Tallada V.A."/>
            <person name="Garzon A."/>
            <person name="Thode G."/>
            <person name="Daga R.R."/>
            <person name="Cruzado L."/>
            <person name="Jimenez J."/>
            <person name="Sanchez M."/>
            <person name="del Rey F."/>
            <person name="Benito J."/>
            <person name="Dominguez A."/>
            <person name="Revuelta J.L."/>
            <person name="Moreno S."/>
            <person name="Armstrong J."/>
            <person name="Forsburg S.L."/>
            <person name="Cerutti L."/>
            <person name="Lowe T."/>
            <person name="McCombie W.R."/>
            <person name="Paulsen I."/>
            <person name="Potashkin J."/>
            <person name="Shpakovski G.V."/>
            <person name="Ussery D."/>
            <person name="Barrell B.G."/>
            <person name="Nurse P."/>
        </authorList>
    </citation>
    <scope>NUCLEOTIDE SEQUENCE [LARGE SCALE GENOMIC DNA]</scope>
    <source>
        <strain>972 / ATCC 24843</strain>
    </source>
</reference>
<gene>
    <name type="primary">aps2</name>
    <name type="ORF">SPBC685.04c</name>
</gene>
<accession>Q9Y7L6</accession>
<keyword id="KW-1003">Cell membrane</keyword>
<keyword id="KW-0168">Coated pit</keyword>
<keyword id="KW-0254">Endocytosis</keyword>
<keyword id="KW-0472">Membrane</keyword>
<keyword id="KW-0653">Protein transport</keyword>
<keyword id="KW-1185">Reference proteome</keyword>
<keyword id="KW-0813">Transport</keyword>
<name>AP2S_SCHPO</name>
<organism>
    <name type="scientific">Schizosaccharomyces pombe (strain 972 / ATCC 24843)</name>
    <name type="common">Fission yeast</name>
    <dbReference type="NCBI Taxonomy" id="284812"/>
    <lineage>
        <taxon>Eukaryota</taxon>
        <taxon>Fungi</taxon>
        <taxon>Dikarya</taxon>
        <taxon>Ascomycota</taxon>
        <taxon>Taphrinomycotina</taxon>
        <taxon>Schizosaccharomycetes</taxon>
        <taxon>Schizosaccharomycetales</taxon>
        <taxon>Schizosaccharomycetaceae</taxon>
        <taxon>Schizosaccharomyces</taxon>
    </lineage>
</organism>